<reference key="1">
    <citation type="journal article" date="1999" name="Nat. Genet.">
        <title>Comparative genomes of Chlamydia pneumoniae and C. trachomatis.</title>
        <authorList>
            <person name="Kalman S."/>
            <person name="Mitchell W.P."/>
            <person name="Marathe R."/>
            <person name="Lammel C.J."/>
            <person name="Fan J."/>
            <person name="Hyman R.W."/>
            <person name="Olinger L."/>
            <person name="Grimwood J."/>
            <person name="Davis R.W."/>
            <person name="Stephens R.S."/>
        </authorList>
    </citation>
    <scope>NUCLEOTIDE SEQUENCE [LARGE SCALE GENOMIC DNA]</scope>
    <source>
        <strain>CWL029</strain>
    </source>
</reference>
<reference key="2">
    <citation type="journal article" date="2000" name="Nucleic Acids Res.">
        <title>Genome sequences of Chlamydia trachomatis MoPn and Chlamydia pneumoniae AR39.</title>
        <authorList>
            <person name="Read T.D."/>
            <person name="Brunham R.C."/>
            <person name="Shen C."/>
            <person name="Gill S.R."/>
            <person name="Heidelberg J.F."/>
            <person name="White O."/>
            <person name="Hickey E.K."/>
            <person name="Peterson J.D."/>
            <person name="Utterback T.R."/>
            <person name="Berry K.J."/>
            <person name="Bass S."/>
            <person name="Linher K.D."/>
            <person name="Weidman J.F."/>
            <person name="Khouri H.M."/>
            <person name="Craven B."/>
            <person name="Bowman C."/>
            <person name="Dodson R.J."/>
            <person name="Gwinn M.L."/>
            <person name="Nelson W.C."/>
            <person name="DeBoy R.T."/>
            <person name="Kolonay J.F."/>
            <person name="McClarty G."/>
            <person name="Salzberg S.L."/>
            <person name="Eisen J.A."/>
            <person name="Fraser C.M."/>
        </authorList>
    </citation>
    <scope>NUCLEOTIDE SEQUENCE [LARGE SCALE GENOMIC DNA]</scope>
    <source>
        <strain>AR39</strain>
    </source>
</reference>
<reference key="3">
    <citation type="journal article" date="2000" name="Nucleic Acids Res.">
        <title>Comparison of whole genome sequences of Chlamydia pneumoniae J138 from Japan and CWL029 from USA.</title>
        <authorList>
            <person name="Shirai M."/>
            <person name="Hirakawa H."/>
            <person name="Kimoto M."/>
            <person name="Tabuchi M."/>
            <person name="Kishi F."/>
            <person name="Ouchi K."/>
            <person name="Shiba T."/>
            <person name="Ishii K."/>
            <person name="Hattori M."/>
            <person name="Kuhara S."/>
            <person name="Nakazawa T."/>
        </authorList>
    </citation>
    <scope>NUCLEOTIDE SEQUENCE [LARGE SCALE GENOMIC DNA]</scope>
    <source>
        <strain>J138</strain>
    </source>
</reference>
<reference key="4">
    <citation type="submission" date="2002-05" db="EMBL/GenBank/DDBJ databases">
        <title>The genome sequence of Chlamydia pneumoniae TW183 and comparison with other Chlamydia strains based on whole genome sequence analysis.</title>
        <authorList>
            <person name="Geng M.M."/>
            <person name="Schuhmacher A."/>
            <person name="Muehldorfer I."/>
            <person name="Bensch K.W."/>
            <person name="Schaefer K.P."/>
            <person name="Schneider S."/>
            <person name="Pohl T."/>
            <person name="Essig A."/>
            <person name="Marre R."/>
            <person name="Melchers K."/>
        </authorList>
    </citation>
    <scope>NUCLEOTIDE SEQUENCE [LARGE SCALE GENOMIC DNA]</scope>
    <source>
        <strain>TW-183</strain>
    </source>
</reference>
<name>Y1010_CHLPN</name>
<evidence type="ECO:0000255" key="1"/>
<evidence type="ECO:0000305" key="2"/>
<accession>Q9Z6P9</accession>
<accession>Q9JRZ7</accession>
<sequence>MLILLNLSLLFYVLFDSPGSIPVFVALLKNFSRKKQQRVILRECLFALGALILFVTFGRSFFQFLDISLYAFQIIGGFLLFTVSIKMMLAPMPEKAKDDTSKTEPIFFPLAFPVITGPAVITALLSYMEEGIYSREIIFTAMIIAWAFSLFTLLCSSFFDRLSGNFGLLALERLFGIALLLMSVNLMLKGISIAFNIGFYIG</sequence>
<organism>
    <name type="scientific">Chlamydia pneumoniae</name>
    <name type="common">Chlamydophila pneumoniae</name>
    <dbReference type="NCBI Taxonomy" id="83558"/>
    <lineage>
        <taxon>Bacteria</taxon>
        <taxon>Pseudomonadati</taxon>
        <taxon>Chlamydiota</taxon>
        <taxon>Chlamydiia</taxon>
        <taxon>Chlamydiales</taxon>
        <taxon>Chlamydiaceae</taxon>
        <taxon>Chlamydia/Chlamydophila group</taxon>
        <taxon>Chlamydia</taxon>
    </lineage>
</organism>
<gene>
    <name type="ordered locus">CPn_1010</name>
    <name type="ordered locus">CP_0843</name>
    <name type="ordered locus">CPj1010</name>
    <name type="ordered locus">CpB1048</name>
</gene>
<feature type="chain" id="PRO_0000156914" description="UPF0056 membrane protein CPn_1010/CP_0843/CPj1010/CpB1048">
    <location>
        <begin position="1"/>
        <end position="202"/>
    </location>
</feature>
<feature type="transmembrane region" description="Helical" evidence="1">
    <location>
        <begin position="7"/>
        <end position="27"/>
    </location>
</feature>
<feature type="transmembrane region" description="Helical" evidence="1">
    <location>
        <begin position="39"/>
        <end position="59"/>
    </location>
</feature>
<feature type="transmembrane region" description="Helical" evidence="1">
    <location>
        <begin position="61"/>
        <end position="81"/>
    </location>
</feature>
<feature type="transmembrane region" description="Helical" evidence="1">
    <location>
        <begin position="105"/>
        <end position="125"/>
    </location>
</feature>
<feature type="transmembrane region" description="Helical" evidence="1">
    <location>
        <begin position="137"/>
        <end position="157"/>
    </location>
</feature>
<feature type="transmembrane region" description="Helical" evidence="1">
    <location>
        <begin position="175"/>
        <end position="195"/>
    </location>
</feature>
<feature type="sequence variant" description="In strain: CWL029 and TW-183.">
    <original>S</original>
    <variation>F</variation>
    <location>
        <position position="163"/>
    </location>
</feature>
<keyword id="KW-1003">Cell membrane</keyword>
<keyword id="KW-0472">Membrane</keyword>
<keyword id="KW-0812">Transmembrane</keyword>
<keyword id="KW-1133">Transmembrane helix</keyword>
<dbReference type="EMBL" id="AE001363">
    <property type="protein sequence ID" value="AAD19147.1"/>
    <property type="molecule type" value="Genomic_DNA"/>
</dbReference>
<dbReference type="EMBL" id="AE002161">
    <property type="protein sequence ID" value="AAF38633.1"/>
    <property type="molecule type" value="Genomic_DNA"/>
</dbReference>
<dbReference type="EMBL" id="BA000008">
    <property type="protein sequence ID" value="BAA99217.1"/>
    <property type="molecule type" value="Genomic_DNA"/>
</dbReference>
<dbReference type="EMBL" id="AE009440">
    <property type="protein sequence ID" value="AAP98977.1"/>
    <property type="molecule type" value="Genomic_DNA"/>
</dbReference>
<dbReference type="PIR" id="A81533">
    <property type="entry name" value="A81533"/>
</dbReference>
<dbReference type="PIR" id="F72008">
    <property type="entry name" value="F72008"/>
</dbReference>
<dbReference type="PIR" id="G86616">
    <property type="entry name" value="G86616"/>
</dbReference>
<dbReference type="RefSeq" id="NP_225204.1">
    <property type="nucleotide sequence ID" value="NC_000922.1"/>
</dbReference>
<dbReference type="RefSeq" id="WP_010883643.1">
    <property type="nucleotide sequence ID" value="NZ_LN847257.1"/>
</dbReference>
<dbReference type="RefSeq" id="WP_010892197.1">
    <property type="nucleotide sequence ID" value="NZ_LN846995.1"/>
</dbReference>
<dbReference type="STRING" id="406984.CPK_ORF00436"/>
<dbReference type="GeneID" id="45051067"/>
<dbReference type="KEGG" id="cpa:CP_0843"/>
<dbReference type="KEGG" id="cpj:CPj1010"/>
<dbReference type="KEGG" id="cpn:CPn_1010"/>
<dbReference type="KEGG" id="cpt:CpB1048"/>
<dbReference type="PATRIC" id="fig|115713.3.peg.1106"/>
<dbReference type="eggNOG" id="COG2095">
    <property type="taxonomic scope" value="Bacteria"/>
</dbReference>
<dbReference type="HOGENOM" id="CLU_079909_1_1_0"/>
<dbReference type="OrthoDB" id="19140at2"/>
<dbReference type="Proteomes" id="UP000000583">
    <property type="component" value="Chromosome"/>
</dbReference>
<dbReference type="Proteomes" id="UP000000801">
    <property type="component" value="Chromosome"/>
</dbReference>
<dbReference type="GO" id="GO:0005886">
    <property type="term" value="C:plasma membrane"/>
    <property type="evidence" value="ECO:0007669"/>
    <property type="project" value="UniProtKB-SubCell"/>
</dbReference>
<dbReference type="InterPro" id="IPR002771">
    <property type="entry name" value="Multi_antbiot-R_MarC"/>
</dbReference>
<dbReference type="PANTHER" id="PTHR33508">
    <property type="entry name" value="UPF0056 MEMBRANE PROTEIN YHCE"/>
    <property type="match status" value="1"/>
</dbReference>
<dbReference type="PANTHER" id="PTHR33508:SF1">
    <property type="entry name" value="UPF0056 MEMBRANE PROTEIN YHCE"/>
    <property type="match status" value="1"/>
</dbReference>
<dbReference type="Pfam" id="PF01914">
    <property type="entry name" value="MarC"/>
    <property type="match status" value="1"/>
</dbReference>
<protein>
    <recommendedName>
        <fullName>UPF0056 membrane protein CPn_1010/CP_0843/CPj1010/CpB1048</fullName>
    </recommendedName>
</protein>
<proteinExistence type="inferred from homology"/>
<comment type="subcellular location">
    <subcellularLocation>
        <location evidence="2">Cell membrane</location>
        <topology evidence="2">Multi-pass membrane protein</topology>
    </subcellularLocation>
</comment>
<comment type="similarity">
    <text evidence="2">Belongs to the UPF0056 (MarC) family.</text>
</comment>